<sequence>MHDADARLTAWVLGTVQGVGFRWWVYSQAKELALAGSASNLVDGRVCVVAEGPKHLCEELLRRLSAHDHSGRPGRVDTVVERWSSPKGEVGFRTR</sequence>
<gene>
    <name type="primary">acyP</name>
    <name type="ordered locus">DIP1541</name>
</gene>
<dbReference type="EC" id="3.6.1.7"/>
<dbReference type="EMBL" id="BX248358">
    <property type="protein sequence ID" value="CAE50066.1"/>
    <property type="molecule type" value="Genomic_DNA"/>
</dbReference>
<dbReference type="RefSeq" id="WP_010935137.1">
    <property type="nucleotide sequence ID" value="NC_002935.2"/>
</dbReference>
<dbReference type="SMR" id="Q6NGH6"/>
<dbReference type="STRING" id="257309.DIP1541"/>
<dbReference type="KEGG" id="cdi:DIP1541"/>
<dbReference type="HOGENOM" id="CLU_141932_3_0_11"/>
<dbReference type="Proteomes" id="UP000002198">
    <property type="component" value="Chromosome"/>
</dbReference>
<dbReference type="GO" id="GO:0003998">
    <property type="term" value="F:acylphosphatase activity"/>
    <property type="evidence" value="ECO:0007669"/>
    <property type="project" value="UniProtKB-EC"/>
</dbReference>
<dbReference type="Gene3D" id="3.30.70.100">
    <property type="match status" value="1"/>
</dbReference>
<dbReference type="InterPro" id="IPR020456">
    <property type="entry name" value="Acylphosphatase"/>
</dbReference>
<dbReference type="InterPro" id="IPR001792">
    <property type="entry name" value="Acylphosphatase-like_dom"/>
</dbReference>
<dbReference type="InterPro" id="IPR036046">
    <property type="entry name" value="Acylphosphatase-like_dom_sf"/>
</dbReference>
<dbReference type="InterPro" id="IPR017968">
    <property type="entry name" value="Acylphosphatase_CS"/>
</dbReference>
<dbReference type="NCBIfam" id="NF010997">
    <property type="entry name" value="PRK14422.1"/>
    <property type="match status" value="1"/>
</dbReference>
<dbReference type="PANTHER" id="PTHR47268">
    <property type="entry name" value="ACYLPHOSPHATASE"/>
    <property type="match status" value="1"/>
</dbReference>
<dbReference type="PANTHER" id="PTHR47268:SF4">
    <property type="entry name" value="ACYLPHOSPHATASE"/>
    <property type="match status" value="1"/>
</dbReference>
<dbReference type="Pfam" id="PF00708">
    <property type="entry name" value="Acylphosphatase"/>
    <property type="match status" value="1"/>
</dbReference>
<dbReference type="SUPFAM" id="SSF54975">
    <property type="entry name" value="Acylphosphatase/BLUF domain-like"/>
    <property type="match status" value="1"/>
</dbReference>
<dbReference type="PROSITE" id="PS00150">
    <property type="entry name" value="ACYLPHOSPHATASE_1"/>
    <property type="match status" value="1"/>
</dbReference>
<dbReference type="PROSITE" id="PS51160">
    <property type="entry name" value="ACYLPHOSPHATASE_3"/>
    <property type="match status" value="1"/>
</dbReference>
<reference key="1">
    <citation type="journal article" date="2003" name="Nucleic Acids Res.">
        <title>The complete genome sequence and analysis of Corynebacterium diphtheriae NCTC13129.</title>
        <authorList>
            <person name="Cerdeno-Tarraga A.-M."/>
            <person name="Efstratiou A."/>
            <person name="Dover L.G."/>
            <person name="Holden M.T.G."/>
            <person name="Pallen M.J."/>
            <person name="Bentley S.D."/>
            <person name="Besra G.S."/>
            <person name="Churcher C.M."/>
            <person name="James K.D."/>
            <person name="De Zoysa A."/>
            <person name="Chillingworth T."/>
            <person name="Cronin A."/>
            <person name="Dowd L."/>
            <person name="Feltwell T."/>
            <person name="Hamlin N."/>
            <person name="Holroyd S."/>
            <person name="Jagels K."/>
            <person name="Moule S."/>
            <person name="Quail M.A."/>
            <person name="Rabbinowitsch E."/>
            <person name="Rutherford K.M."/>
            <person name="Thomson N.R."/>
            <person name="Unwin L."/>
            <person name="Whitehead S."/>
            <person name="Barrell B.G."/>
            <person name="Parkhill J."/>
        </authorList>
    </citation>
    <scope>NUCLEOTIDE SEQUENCE [LARGE SCALE GENOMIC DNA]</scope>
    <source>
        <strain>ATCC 700971 / NCTC 13129 / Biotype gravis</strain>
    </source>
</reference>
<comment type="catalytic activity">
    <reaction>
        <text>an acyl phosphate + H2O = a carboxylate + phosphate + H(+)</text>
        <dbReference type="Rhea" id="RHEA:14965"/>
        <dbReference type="ChEBI" id="CHEBI:15377"/>
        <dbReference type="ChEBI" id="CHEBI:15378"/>
        <dbReference type="ChEBI" id="CHEBI:29067"/>
        <dbReference type="ChEBI" id="CHEBI:43474"/>
        <dbReference type="ChEBI" id="CHEBI:59918"/>
        <dbReference type="EC" id="3.6.1.7"/>
    </reaction>
</comment>
<comment type="similarity">
    <text evidence="2">Belongs to the acylphosphatase family.</text>
</comment>
<organism>
    <name type="scientific">Corynebacterium diphtheriae (strain ATCC 700971 / NCTC 13129 / Biotype gravis)</name>
    <dbReference type="NCBI Taxonomy" id="257309"/>
    <lineage>
        <taxon>Bacteria</taxon>
        <taxon>Bacillati</taxon>
        <taxon>Actinomycetota</taxon>
        <taxon>Actinomycetes</taxon>
        <taxon>Mycobacteriales</taxon>
        <taxon>Corynebacteriaceae</taxon>
        <taxon>Corynebacterium</taxon>
    </lineage>
</organism>
<keyword id="KW-0378">Hydrolase</keyword>
<keyword id="KW-1185">Reference proteome</keyword>
<evidence type="ECO:0000255" key="1">
    <source>
        <dbReference type="PROSITE-ProRule" id="PRU00520"/>
    </source>
</evidence>
<evidence type="ECO:0000305" key="2"/>
<accession>Q6NGH6</accession>
<protein>
    <recommendedName>
        <fullName>Acylphosphatase</fullName>
        <ecNumber>3.6.1.7</ecNumber>
    </recommendedName>
    <alternativeName>
        <fullName>Acylphosphate phosphohydrolase</fullName>
    </alternativeName>
</protein>
<feature type="chain" id="PRO_0000326689" description="Acylphosphatase">
    <location>
        <begin position="1"/>
        <end position="95"/>
    </location>
</feature>
<feature type="domain" description="Acylphosphatase-like" evidence="1">
    <location>
        <begin position="7"/>
        <end position="95"/>
    </location>
</feature>
<feature type="active site" evidence="1">
    <location>
        <position position="22"/>
    </location>
</feature>
<feature type="active site" evidence="1">
    <location>
        <position position="40"/>
    </location>
</feature>
<name>ACYP_CORDI</name>
<proteinExistence type="inferred from homology"/>